<comment type="function">
    <text evidence="1">Key structural component of the deuterosome, a structure that promotes de novo centriole amplification in multiciliated cells. Deuterosome-mediated centriole amplification occurs in terminally differentiated multiciliated cells and can generate more than 100 centrioles. Probably sufficient for the specification and formation of the deuterosome inner core. Interacts with CEP152 and recruits PLK4 to activate centriole biogenesis (By similarity).</text>
</comment>
<comment type="subunit">
    <text evidence="1">Interacts with CEP152; the interaction is mutually exclusive with CEP63.</text>
</comment>
<comment type="subcellular location">
    <subcellularLocation>
        <location evidence="1">Cytoplasm</location>
    </subcellularLocation>
    <text evidence="1">Localizes to the deuterosome.</text>
</comment>
<comment type="similarity">
    <text evidence="5">Belongs to the CEP63 family.</text>
</comment>
<comment type="sequence caution" evidence="5">
    <conflict type="miscellaneous discrepancy">
        <sequence resource="EMBL-CDS" id="BAB63125"/>
    </conflict>
    <text>Contaminating sequence. Potential poly-A sequence. The C-terminus was extended based on orthologous sequences.</text>
</comment>
<sequence>MENQAHNTMGTSPCEAELQELMEQIDIMVSNKKMDWERKMRALETRLDLRDQELANAQTCLDQKGQEVGLLRQKLDSLEKCNLAMTQNYEGQLQSLKAQFSKLTNSFEKLRLHQMKQNKVPRKELPHLKEELPFELSNLNQKLEEFRAKSREWDKQEILYQTHLISLDAQQKLLSEKCNQFQKQAQSYQTQLNGKKQCLEDSSSEIPRLICDPDPNCEIGERDEFIIEKLKSAVSEIALSRNKLQDENQKLLQELKMYQRQCQAMEAGLSEVKSELQSRDDLLRIIEMERLQLHRELLKIGECQNAQGNKKRLESSHLPSIKEPERKRKELFSVMQDQPNHEKELNKIRSQLQQEEEYHNSEQERMRNEISDLTEELHQKEITIATVTKKAALLEKQLKMELEIKEKMLAKEQVSDMKYKAVRTENTHLKGMMGDLDPGRYMSMDFTNREHSRHTSINKLEYENERLRNDLAKLRVNGKSTRTNQNTYEETGRYAYQSQIKVEKNEERLSHDCEPNRSTSPLPPLTFQTKEMTSPLVSDDDVFPLSPPDMSFPASLAAQHFLLEEEKRAKELEKLLNTHIDELQRHTEFTLNKYSKLKQNRHI</sequence>
<feature type="chain" id="PRO_0000297830" description="Deuterosome assembly protein 1">
    <location>
        <begin position="1"/>
        <end position="603"/>
    </location>
</feature>
<feature type="coiled-coil region" evidence="4">
    <location>
        <begin position="14"/>
        <end position="59"/>
    </location>
</feature>
<feature type="coiled-coil region" evidence="4">
    <location>
        <begin position="85"/>
        <end position="197"/>
    </location>
</feature>
<feature type="coiled-coil region" evidence="4">
    <location>
        <begin position="227"/>
        <end position="278"/>
    </location>
</feature>
<feature type="coiled-coil region" evidence="4">
    <location>
        <begin position="336"/>
        <end position="399"/>
    </location>
</feature>
<feature type="coiled-coil region" evidence="4">
    <location>
        <begin position="454"/>
        <end position="480"/>
    </location>
</feature>
<feature type="coiled-coil region" evidence="4">
    <location>
        <begin position="557"/>
        <end position="600"/>
    </location>
</feature>
<feature type="modified residue" description="Phosphoserine" evidence="3">
    <location>
        <position position="546"/>
    </location>
</feature>
<accession>Q95JK1</accession>
<evidence type="ECO:0000250" key="1"/>
<evidence type="ECO:0000250" key="2">
    <source>
        <dbReference type="UniProtKB" id="Q05D60"/>
    </source>
</evidence>
<evidence type="ECO:0000250" key="3">
    <source>
        <dbReference type="UniProtKB" id="Q5U3Z6"/>
    </source>
</evidence>
<evidence type="ECO:0000255" key="4"/>
<evidence type="ECO:0000305" key="5"/>
<reference key="1">
    <citation type="journal article" date="2002" name="BMC Genomics">
        <title>Cynomolgus monkey testicular cDNAs for discovery of novel human genes in the human genome sequence.</title>
        <authorList>
            <person name="Osada N."/>
            <person name="Hida M."/>
            <person name="Kusuda J."/>
            <person name="Tanuma R."/>
            <person name="Hirata M."/>
            <person name="Suto Y."/>
            <person name="Hirai M."/>
            <person name="Terao K."/>
            <person name="Sugano S."/>
            <person name="Hashimoto K."/>
        </authorList>
    </citation>
    <scope>NUCLEOTIDE SEQUENCE [LARGE SCALE MRNA]</scope>
    <source>
        <tissue>Testis</tissue>
    </source>
</reference>
<proteinExistence type="evidence at transcript level"/>
<keyword id="KW-0970">Cilium biogenesis/degradation</keyword>
<keyword id="KW-0175">Coiled coil</keyword>
<keyword id="KW-0963">Cytoplasm</keyword>
<keyword id="KW-0597">Phosphoprotein</keyword>
<keyword id="KW-1185">Reference proteome</keyword>
<name>DEUP1_MACFA</name>
<gene>
    <name evidence="2" type="primary">DEUP1</name>
    <name type="synonym">CCDC67</name>
    <name type="ORF">QtsA-16541</name>
</gene>
<organism>
    <name type="scientific">Macaca fascicularis</name>
    <name type="common">Crab-eating macaque</name>
    <name type="synonym">Cynomolgus monkey</name>
    <dbReference type="NCBI Taxonomy" id="9541"/>
    <lineage>
        <taxon>Eukaryota</taxon>
        <taxon>Metazoa</taxon>
        <taxon>Chordata</taxon>
        <taxon>Craniata</taxon>
        <taxon>Vertebrata</taxon>
        <taxon>Euteleostomi</taxon>
        <taxon>Mammalia</taxon>
        <taxon>Eutheria</taxon>
        <taxon>Euarchontoglires</taxon>
        <taxon>Primates</taxon>
        <taxon>Haplorrhini</taxon>
        <taxon>Catarrhini</taxon>
        <taxon>Cercopithecidae</taxon>
        <taxon>Cercopithecinae</taxon>
        <taxon>Macaca</taxon>
    </lineage>
</organism>
<protein>
    <recommendedName>
        <fullName evidence="2">Deuterosome assembly protein 1</fullName>
    </recommendedName>
    <alternativeName>
        <fullName>Coiled-coil domain-containing protein 67</fullName>
    </alternativeName>
</protein>
<dbReference type="EMBL" id="AB070180">
    <property type="protein sequence ID" value="BAB63125.1"/>
    <property type="status" value="ALT_SEQ"/>
    <property type="molecule type" value="mRNA"/>
</dbReference>
<dbReference type="RefSeq" id="XP_005579406.1">
    <property type="nucleotide sequence ID" value="XM_005579349.2"/>
</dbReference>
<dbReference type="RefSeq" id="XP_015291090.1">
    <property type="nucleotide sequence ID" value="XM_015435604.1"/>
</dbReference>
<dbReference type="SMR" id="Q95JK1"/>
<dbReference type="STRING" id="9541.ENSMFAP00000019212"/>
<dbReference type="GeneID" id="102122333"/>
<dbReference type="KEGG" id="mcf:102122333"/>
<dbReference type="CTD" id="159989"/>
<dbReference type="VEuPathDB" id="HostDB:ENSMFAG00000032572"/>
<dbReference type="eggNOG" id="ENOG502QRBJ">
    <property type="taxonomic scope" value="Eukaryota"/>
</dbReference>
<dbReference type="OrthoDB" id="10657at314294"/>
<dbReference type="Proteomes" id="UP000233100">
    <property type="component" value="Chromosome 14"/>
</dbReference>
<dbReference type="GO" id="GO:0005814">
    <property type="term" value="C:centriole"/>
    <property type="evidence" value="ECO:0007669"/>
    <property type="project" value="TreeGrafter"/>
</dbReference>
<dbReference type="GO" id="GO:0005737">
    <property type="term" value="C:cytoplasm"/>
    <property type="evidence" value="ECO:0007669"/>
    <property type="project" value="UniProtKB-SubCell"/>
</dbReference>
<dbReference type="GO" id="GO:0098536">
    <property type="term" value="C:deuterosome"/>
    <property type="evidence" value="ECO:0000250"/>
    <property type="project" value="UniProtKB"/>
</dbReference>
<dbReference type="GO" id="GO:0030030">
    <property type="term" value="P:cell projection organization"/>
    <property type="evidence" value="ECO:0007669"/>
    <property type="project" value="UniProtKB-KW"/>
</dbReference>
<dbReference type="GO" id="GO:0007099">
    <property type="term" value="P:centriole replication"/>
    <property type="evidence" value="ECO:0007669"/>
    <property type="project" value="TreeGrafter"/>
</dbReference>
<dbReference type="GO" id="GO:0098535">
    <property type="term" value="P:de novo centriole assembly involved in multi-ciliated epithelial cell differentiation"/>
    <property type="evidence" value="ECO:0000250"/>
    <property type="project" value="UniProtKB"/>
</dbReference>
<dbReference type="GO" id="GO:1903251">
    <property type="term" value="P:multi-ciliated epithelial cell differentiation"/>
    <property type="evidence" value="ECO:0000250"/>
    <property type="project" value="UniProtKB"/>
</dbReference>
<dbReference type="InterPro" id="IPR031470">
    <property type="entry name" value="Cep63/Deup1_N"/>
</dbReference>
<dbReference type="PANTHER" id="PTHR18875:SF5">
    <property type="entry name" value="DEUTEROSOME ASSEMBLY PROTEIN 1"/>
    <property type="match status" value="1"/>
</dbReference>
<dbReference type="PANTHER" id="PTHR18875">
    <property type="entry name" value="SARCOMA ANTIGEN NY-SAR-24/CYTOSKELETAL PROTEIN SOJO"/>
    <property type="match status" value="1"/>
</dbReference>
<dbReference type="Pfam" id="PF17045">
    <property type="entry name" value="CEP63"/>
    <property type="match status" value="1"/>
</dbReference>